<proteinExistence type="inferred from homology"/>
<feature type="chain" id="PRO_1000118702" description="DNA mismatch repair protein MutS">
    <location>
        <begin position="1"/>
        <end position="853"/>
    </location>
</feature>
<feature type="binding site" evidence="1">
    <location>
        <begin position="613"/>
        <end position="620"/>
    </location>
    <ligand>
        <name>ATP</name>
        <dbReference type="ChEBI" id="CHEBI:30616"/>
    </ligand>
</feature>
<evidence type="ECO:0000255" key="1">
    <source>
        <dbReference type="HAMAP-Rule" id="MF_00096"/>
    </source>
</evidence>
<sequence>MKADQKHTPMMQQYLKLKAENPEILLFYRMGDFYELFYDDAKKASQLLDISLTKRGSSNGEPIPMAGVPYHAVEGYLAKLVQLGESVAICEQIGNPATSKGPVERAVVRIVTPGTVTDEALLSERIDNLIASIYHHNGKFGYATLDITSGRFQLCEPETEEAMAAELQRTSPRELLFPEDFEPVNLMASRNGNRRRPVWEFELDTAKQQLNKQFGTRDLVGFGVEGAKLGLCAAGCLIQYVKDTQRTALPHIRSLTMDKQDHSVILDAATRRNLEITQNLGGGTDNTLAEVLDHTATAMGSRMLKRWLHQPMRNISALDQRLDAIGEMKDLALFTELQPTLKQIGDIERILARLALRSARPRDMARLRQAMEYLPELAETLTQLKHPYLTQLAQYASPVDEVSELLERAIKENPPVVIRDGGVIAEGYNAELDEWRDLAAGATEFLDKLEQEERERHGIDTLKVGYNNVHGFFIQVSRGQSHLVPPHYVRRQTLKNAERYIIPELKEHEDKVLSSKSKALAIEKKLWDELFDLLLPYLERLQNIASSVSQLDVLQNLAERADTLDYCRPTMTESAGVQIQAGRHPVVEQVMDEPFIANPIDLNDQRKMLIITGPNMGGKSTYMRQTALIALMAHIGCYVPAESATIGSIDRIFTRIGASDDLASGRSTFMVEMTETANILHNATPNSLVLMDEIGRGTSTYDGLSLAWASAEWLANQINAMTLFATHYFELTELPNQIPTLANVHLDAVEHGDSIAFMHAVQEGAASKSYGLAVAGLAGVPKAVIKNARAKLTQLEALSIDSPTSKPSGVDIANQLSLIPEPSEVEQALANVDPDDLTPRQALEELYRLKKLL</sequence>
<name>MUTS_VIBA3</name>
<dbReference type="EMBL" id="FM954972">
    <property type="protein sequence ID" value="CAV19791.1"/>
    <property type="molecule type" value="Genomic_DNA"/>
</dbReference>
<dbReference type="SMR" id="B7VK59"/>
<dbReference type="STRING" id="575788.VS_2598"/>
<dbReference type="KEGG" id="vsp:VS_2598"/>
<dbReference type="PATRIC" id="fig|575788.5.peg.3847"/>
<dbReference type="eggNOG" id="COG0249">
    <property type="taxonomic scope" value="Bacteria"/>
</dbReference>
<dbReference type="HOGENOM" id="CLU_002472_4_0_6"/>
<dbReference type="Proteomes" id="UP000009100">
    <property type="component" value="Chromosome 1"/>
</dbReference>
<dbReference type="GO" id="GO:0005829">
    <property type="term" value="C:cytosol"/>
    <property type="evidence" value="ECO:0007669"/>
    <property type="project" value="TreeGrafter"/>
</dbReference>
<dbReference type="GO" id="GO:0005524">
    <property type="term" value="F:ATP binding"/>
    <property type="evidence" value="ECO:0007669"/>
    <property type="project" value="UniProtKB-UniRule"/>
</dbReference>
<dbReference type="GO" id="GO:0140664">
    <property type="term" value="F:ATP-dependent DNA damage sensor activity"/>
    <property type="evidence" value="ECO:0007669"/>
    <property type="project" value="InterPro"/>
</dbReference>
<dbReference type="GO" id="GO:0003684">
    <property type="term" value="F:damaged DNA binding"/>
    <property type="evidence" value="ECO:0007669"/>
    <property type="project" value="UniProtKB-UniRule"/>
</dbReference>
<dbReference type="GO" id="GO:0030983">
    <property type="term" value="F:mismatched DNA binding"/>
    <property type="evidence" value="ECO:0007669"/>
    <property type="project" value="InterPro"/>
</dbReference>
<dbReference type="GO" id="GO:0006298">
    <property type="term" value="P:mismatch repair"/>
    <property type="evidence" value="ECO:0007669"/>
    <property type="project" value="UniProtKB-UniRule"/>
</dbReference>
<dbReference type="CDD" id="cd03284">
    <property type="entry name" value="ABC_MutS1"/>
    <property type="match status" value="1"/>
</dbReference>
<dbReference type="FunFam" id="1.10.1420.10:FF:000002">
    <property type="entry name" value="DNA mismatch repair protein MutS"/>
    <property type="match status" value="1"/>
</dbReference>
<dbReference type="FunFam" id="3.30.420.110:FF:000001">
    <property type="entry name" value="DNA mismatch repair protein MutS"/>
    <property type="match status" value="1"/>
</dbReference>
<dbReference type="FunFam" id="3.40.1170.10:FF:000001">
    <property type="entry name" value="DNA mismatch repair protein MutS"/>
    <property type="match status" value="1"/>
</dbReference>
<dbReference type="FunFam" id="3.40.50.300:FF:000283">
    <property type="entry name" value="DNA mismatch repair protein MutS"/>
    <property type="match status" value="1"/>
</dbReference>
<dbReference type="Gene3D" id="1.10.1420.10">
    <property type="match status" value="2"/>
</dbReference>
<dbReference type="Gene3D" id="6.10.140.430">
    <property type="match status" value="1"/>
</dbReference>
<dbReference type="Gene3D" id="3.40.1170.10">
    <property type="entry name" value="DNA repair protein MutS, domain I"/>
    <property type="match status" value="1"/>
</dbReference>
<dbReference type="Gene3D" id="3.30.420.110">
    <property type="entry name" value="MutS, connector domain"/>
    <property type="match status" value="1"/>
</dbReference>
<dbReference type="Gene3D" id="3.40.50.300">
    <property type="entry name" value="P-loop containing nucleotide triphosphate hydrolases"/>
    <property type="match status" value="1"/>
</dbReference>
<dbReference type="HAMAP" id="MF_00096">
    <property type="entry name" value="MutS"/>
    <property type="match status" value="1"/>
</dbReference>
<dbReference type="InterPro" id="IPR005748">
    <property type="entry name" value="DNA_mismatch_repair_MutS"/>
</dbReference>
<dbReference type="InterPro" id="IPR007695">
    <property type="entry name" value="DNA_mismatch_repair_MutS-lik_N"/>
</dbReference>
<dbReference type="InterPro" id="IPR017261">
    <property type="entry name" value="DNA_mismatch_repair_MutS/MSH"/>
</dbReference>
<dbReference type="InterPro" id="IPR000432">
    <property type="entry name" value="DNA_mismatch_repair_MutS_C"/>
</dbReference>
<dbReference type="InterPro" id="IPR007861">
    <property type="entry name" value="DNA_mismatch_repair_MutS_clamp"/>
</dbReference>
<dbReference type="InterPro" id="IPR007696">
    <property type="entry name" value="DNA_mismatch_repair_MutS_core"/>
</dbReference>
<dbReference type="InterPro" id="IPR016151">
    <property type="entry name" value="DNA_mismatch_repair_MutS_N"/>
</dbReference>
<dbReference type="InterPro" id="IPR036187">
    <property type="entry name" value="DNA_mismatch_repair_MutS_sf"/>
</dbReference>
<dbReference type="InterPro" id="IPR007860">
    <property type="entry name" value="DNA_mmatch_repair_MutS_con_dom"/>
</dbReference>
<dbReference type="InterPro" id="IPR045076">
    <property type="entry name" value="MutS"/>
</dbReference>
<dbReference type="InterPro" id="IPR036678">
    <property type="entry name" value="MutS_con_dom_sf"/>
</dbReference>
<dbReference type="InterPro" id="IPR027417">
    <property type="entry name" value="P-loop_NTPase"/>
</dbReference>
<dbReference type="NCBIfam" id="TIGR01070">
    <property type="entry name" value="mutS1"/>
    <property type="match status" value="1"/>
</dbReference>
<dbReference type="NCBIfam" id="NF003810">
    <property type="entry name" value="PRK05399.1"/>
    <property type="match status" value="1"/>
</dbReference>
<dbReference type="PANTHER" id="PTHR11361:SF34">
    <property type="entry name" value="DNA MISMATCH REPAIR PROTEIN MSH1, MITOCHONDRIAL"/>
    <property type="match status" value="1"/>
</dbReference>
<dbReference type="PANTHER" id="PTHR11361">
    <property type="entry name" value="DNA MISMATCH REPAIR PROTEIN MUTS FAMILY MEMBER"/>
    <property type="match status" value="1"/>
</dbReference>
<dbReference type="Pfam" id="PF01624">
    <property type="entry name" value="MutS_I"/>
    <property type="match status" value="1"/>
</dbReference>
<dbReference type="Pfam" id="PF05188">
    <property type="entry name" value="MutS_II"/>
    <property type="match status" value="1"/>
</dbReference>
<dbReference type="Pfam" id="PF05192">
    <property type="entry name" value="MutS_III"/>
    <property type="match status" value="1"/>
</dbReference>
<dbReference type="Pfam" id="PF05190">
    <property type="entry name" value="MutS_IV"/>
    <property type="match status" value="1"/>
</dbReference>
<dbReference type="Pfam" id="PF00488">
    <property type="entry name" value="MutS_V"/>
    <property type="match status" value="1"/>
</dbReference>
<dbReference type="PIRSF" id="PIRSF037677">
    <property type="entry name" value="DNA_mis_repair_Msh6"/>
    <property type="match status" value="1"/>
</dbReference>
<dbReference type="SMART" id="SM00534">
    <property type="entry name" value="MUTSac"/>
    <property type="match status" value="1"/>
</dbReference>
<dbReference type="SMART" id="SM00533">
    <property type="entry name" value="MUTSd"/>
    <property type="match status" value="1"/>
</dbReference>
<dbReference type="SUPFAM" id="SSF55271">
    <property type="entry name" value="DNA repair protein MutS, domain I"/>
    <property type="match status" value="1"/>
</dbReference>
<dbReference type="SUPFAM" id="SSF53150">
    <property type="entry name" value="DNA repair protein MutS, domain II"/>
    <property type="match status" value="1"/>
</dbReference>
<dbReference type="SUPFAM" id="SSF48334">
    <property type="entry name" value="DNA repair protein MutS, domain III"/>
    <property type="match status" value="1"/>
</dbReference>
<dbReference type="SUPFAM" id="SSF52540">
    <property type="entry name" value="P-loop containing nucleoside triphosphate hydrolases"/>
    <property type="match status" value="1"/>
</dbReference>
<dbReference type="PROSITE" id="PS00486">
    <property type="entry name" value="DNA_MISMATCH_REPAIR_2"/>
    <property type="match status" value="1"/>
</dbReference>
<accession>B7VK59</accession>
<protein>
    <recommendedName>
        <fullName evidence="1">DNA mismatch repair protein MutS</fullName>
    </recommendedName>
</protein>
<comment type="function">
    <text evidence="1">This protein is involved in the repair of mismatches in DNA. It is possible that it carries out the mismatch recognition step. This protein has a weak ATPase activity.</text>
</comment>
<comment type="similarity">
    <text evidence="1">Belongs to the DNA mismatch repair MutS family.</text>
</comment>
<gene>
    <name evidence="1" type="primary">mutS</name>
    <name type="ordered locus">VS_2598</name>
</gene>
<keyword id="KW-0067">ATP-binding</keyword>
<keyword id="KW-0227">DNA damage</keyword>
<keyword id="KW-0234">DNA repair</keyword>
<keyword id="KW-0238">DNA-binding</keyword>
<keyword id="KW-0547">Nucleotide-binding</keyword>
<organism>
    <name type="scientific">Vibrio atlanticus (strain LGP32)</name>
    <name type="common">Vibrio splendidus (strain Mel32)</name>
    <dbReference type="NCBI Taxonomy" id="575788"/>
    <lineage>
        <taxon>Bacteria</taxon>
        <taxon>Pseudomonadati</taxon>
        <taxon>Pseudomonadota</taxon>
        <taxon>Gammaproteobacteria</taxon>
        <taxon>Vibrionales</taxon>
        <taxon>Vibrionaceae</taxon>
        <taxon>Vibrio</taxon>
    </lineage>
</organism>
<reference key="1">
    <citation type="submission" date="2009-02" db="EMBL/GenBank/DDBJ databases">
        <title>Vibrio splendidus str. LGP32 complete genome.</title>
        <authorList>
            <person name="Mazel D."/>
            <person name="Le Roux F."/>
        </authorList>
    </citation>
    <scope>NUCLEOTIDE SEQUENCE [LARGE SCALE GENOMIC DNA]</scope>
    <source>
        <strain>LGP32</strain>
    </source>
</reference>